<dbReference type="EC" id="1.3.5.2" evidence="1"/>
<dbReference type="EMBL" id="CP001277">
    <property type="protein sequence ID" value="ACQ67396.1"/>
    <property type="molecule type" value="Genomic_DNA"/>
</dbReference>
<dbReference type="RefSeq" id="WP_015873217.1">
    <property type="nucleotide sequence ID" value="NC_012751.1"/>
</dbReference>
<dbReference type="SMR" id="C4K4A3"/>
<dbReference type="STRING" id="572265.HDEF_0655"/>
<dbReference type="GeneID" id="66260523"/>
<dbReference type="KEGG" id="hde:HDEF_0655"/>
<dbReference type="eggNOG" id="COG0167">
    <property type="taxonomic scope" value="Bacteria"/>
</dbReference>
<dbReference type="HOGENOM" id="CLU_013640_2_0_6"/>
<dbReference type="UniPathway" id="UPA00070">
    <property type="reaction ID" value="UER00946"/>
</dbReference>
<dbReference type="Proteomes" id="UP000002334">
    <property type="component" value="Chromosome"/>
</dbReference>
<dbReference type="GO" id="GO:0005737">
    <property type="term" value="C:cytoplasm"/>
    <property type="evidence" value="ECO:0007669"/>
    <property type="project" value="InterPro"/>
</dbReference>
<dbReference type="GO" id="GO:0005886">
    <property type="term" value="C:plasma membrane"/>
    <property type="evidence" value="ECO:0007669"/>
    <property type="project" value="UniProtKB-SubCell"/>
</dbReference>
<dbReference type="GO" id="GO:0106430">
    <property type="term" value="F:dihydroorotate dehydrogenase (quinone) activity"/>
    <property type="evidence" value="ECO:0007669"/>
    <property type="project" value="UniProtKB-EC"/>
</dbReference>
<dbReference type="GO" id="GO:0006207">
    <property type="term" value="P:'de novo' pyrimidine nucleobase biosynthetic process"/>
    <property type="evidence" value="ECO:0007669"/>
    <property type="project" value="InterPro"/>
</dbReference>
<dbReference type="GO" id="GO:0044205">
    <property type="term" value="P:'de novo' UMP biosynthetic process"/>
    <property type="evidence" value="ECO:0007669"/>
    <property type="project" value="UniProtKB-UniRule"/>
</dbReference>
<dbReference type="CDD" id="cd04738">
    <property type="entry name" value="DHOD_2_like"/>
    <property type="match status" value="1"/>
</dbReference>
<dbReference type="FunFam" id="3.20.20.70:FF:000028">
    <property type="entry name" value="Dihydroorotate dehydrogenase (quinone)"/>
    <property type="match status" value="1"/>
</dbReference>
<dbReference type="Gene3D" id="3.20.20.70">
    <property type="entry name" value="Aldolase class I"/>
    <property type="match status" value="1"/>
</dbReference>
<dbReference type="HAMAP" id="MF_00225">
    <property type="entry name" value="DHO_dh_type2"/>
    <property type="match status" value="1"/>
</dbReference>
<dbReference type="InterPro" id="IPR013785">
    <property type="entry name" value="Aldolase_TIM"/>
</dbReference>
<dbReference type="InterPro" id="IPR050074">
    <property type="entry name" value="DHO_dehydrogenase"/>
</dbReference>
<dbReference type="InterPro" id="IPR012135">
    <property type="entry name" value="Dihydroorotate_DH_1_2"/>
</dbReference>
<dbReference type="InterPro" id="IPR005719">
    <property type="entry name" value="Dihydroorotate_DH_2"/>
</dbReference>
<dbReference type="InterPro" id="IPR005720">
    <property type="entry name" value="Dihydroorotate_DH_cat"/>
</dbReference>
<dbReference type="InterPro" id="IPR001295">
    <property type="entry name" value="Dihydroorotate_DH_CS"/>
</dbReference>
<dbReference type="NCBIfam" id="NF003644">
    <property type="entry name" value="PRK05286.1-1"/>
    <property type="match status" value="1"/>
</dbReference>
<dbReference type="NCBIfam" id="NF003645">
    <property type="entry name" value="PRK05286.1-2"/>
    <property type="match status" value="1"/>
</dbReference>
<dbReference type="NCBIfam" id="NF003646">
    <property type="entry name" value="PRK05286.1-4"/>
    <property type="match status" value="1"/>
</dbReference>
<dbReference type="NCBIfam" id="NF003652">
    <property type="entry name" value="PRK05286.2-5"/>
    <property type="match status" value="1"/>
</dbReference>
<dbReference type="NCBIfam" id="TIGR01036">
    <property type="entry name" value="pyrD_sub2"/>
    <property type="match status" value="1"/>
</dbReference>
<dbReference type="PANTHER" id="PTHR48109:SF4">
    <property type="entry name" value="DIHYDROOROTATE DEHYDROGENASE (QUINONE), MITOCHONDRIAL"/>
    <property type="match status" value="1"/>
</dbReference>
<dbReference type="PANTHER" id="PTHR48109">
    <property type="entry name" value="DIHYDROOROTATE DEHYDROGENASE (QUINONE), MITOCHONDRIAL-RELATED"/>
    <property type="match status" value="1"/>
</dbReference>
<dbReference type="Pfam" id="PF01180">
    <property type="entry name" value="DHO_dh"/>
    <property type="match status" value="1"/>
</dbReference>
<dbReference type="PIRSF" id="PIRSF000164">
    <property type="entry name" value="DHO_oxidase"/>
    <property type="match status" value="1"/>
</dbReference>
<dbReference type="SUPFAM" id="SSF51395">
    <property type="entry name" value="FMN-linked oxidoreductases"/>
    <property type="match status" value="1"/>
</dbReference>
<dbReference type="PROSITE" id="PS00911">
    <property type="entry name" value="DHODEHASE_1"/>
    <property type="match status" value="1"/>
</dbReference>
<dbReference type="PROSITE" id="PS00912">
    <property type="entry name" value="DHODEHASE_2"/>
    <property type="match status" value="1"/>
</dbReference>
<name>PYRD_HAMD5</name>
<feature type="chain" id="PRO_1000204316" description="Dihydroorotate dehydrogenase (quinone)">
    <location>
        <begin position="1"/>
        <end position="336"/>
    </location>
</feature>
<feature type="active site" description="Nucleophile" evidence="1">
    <location>
        <position position="175"/>
    </location>
</feature>
<feature type="binding site" evidence="1">
    <location>
        <begin position="62"/>
        <end position="66"/>
    </location>
    <ligand>
        <name>FMN</name>
        <dbReference type="ChEBI" id="CHEBI:58210"/>
    </ligand>
</feature>
<feature type="binding site" evidence="1">
    <location>
        <position position="66"/>
    </location>
    <ligand>
        <name>substrate</name>
    </ligand>
</feature>
<feature type="binding site" evidence="1">
    <location>
        <position position="86"/>
    </location>
    <ligand>
        <name>FMN</name>
        <dbReference type="ChEBI" id="CHEBI:58210"/>
    </ligand>
</feature>
<feature type="binding site" evidence="1">
    <location>
        <begin position="111"/>
        <end position="115"/>
    </location>
    <ligand>
        <name>substrate</name>
    </ligand>
</feature>
<feature type="binding site" evidence="1">
    <location>
        <position position="139"/>
    </location>
    <ligand>
        <name>FMN</name>
        <dbReference type="ChEBI" id="CHEBI:58210"/>
    </ligand>
</feature>
<feature type="binding site" evidence="1">
    <location>
        <position position="172"/>
    </location>
    <ligand>
        <name>FMN</name>
        <dbReference type="ChEBI" id="CHEBI:58210"/>
    </ligand>
</feature>
<feature type="binding site" evidence="1">
    <location>
        <position position="172"/>
    </location>
    <ligand>
        <name>substrate</name>
    </ligand>
</feature>
<feature type="binding site" evidence="1">
    <location>
        <position position="177"/>
    </location>
    <ligand>
        <name>substrate</name>
    </ligand>
</feature>
<feature type="binding site" evidence="1">
    <location>
        <position position="217"/>
    </location>
    <ligand>
        <name>FMN</name>
        <dbReference type="ChEBI" id="CHEBI:58210"/>
    </ligand>
</feature>
<feature type="binding site" evidence="1">
    <location>
        <position position="245"/>
    </location>
    <ligand>
        <name>FMN</name>
        <dbReference type="ChEBI" id="CHEBI:58210"/>
    </ligand>
</feature>
<feature type="binding site" evidence="1">
    <location>
        <begin position="246"/>
        <end position="247"/>
    </location>
    <ligand>
        <name>substrate</name>
    </ligand>
</feature>
<feature type="binding site" evidence="1">
    <location>
        <position position="268"/>
    </location>
    <ligand>
        <name>FMN</name>
        <dbReference type="ChEBI" id="CHEBI:58210"/>
    </ligand>
</feature>
<feature type="binding site" evidence="1">
    <location>
        <position position="297"/>
    </location>
    <ligand>
        <name>FMN</name>
        <dbReference type="ChEBI" id="CHEBI:58210"/>
    </ligand>
</feature>
<feature type="binding site" evidence="1">
    <location>
        <begin position="318"/>
        <end position="319"/>
    </location>
    <ligand>
        <name>FMN</name>
        <dbReference type="ChEBI" id="CHEBI:58210"/>
    </ligand>
</feature>
<proteinExistence type="inferred from homology"/>
<evidence type="ECO:0000255" key="1">
    <source>
        <dbReference type="HAMAP-Rule" id="MF_00225"/>
    </source>
</evidence>
<sequence length="336" mass="37106">MFYSCLKKILFQLDPEHSHEFTFRHLKRITGTPLQFLISQSVPTKSVDCMGLSFKNPLGLAAGLDKNGDCIDVLGAMGFGFIEVGTVTPLPQQGNQKPRLFRVTEAEALINRMGFNNLGVDYLINNIKRSRFGGVLGINIGKNKETPLEVSKEDYLICMDKVYPYAGYIAVNISSPNTEKLRQLQYGDLLEDMLTSVKKKQTQLHEQHDRYVPVAVKISPDLSEEELIKLADAFLKHEIDGVIATNTTLDHSLIQGLNHCQQSGGLSGRPLQPSSNETIRLLSKELKGRIPIIGVGGIDSLMAAREKIAAGASLLQLYSGLIFQGPALIKKIIHHI</sequence>
<organism>
    <name type="scientific">Hamiltonella defensa subsp. Acyrthosiphon pisum (strain 5AT)</name>
    <dbReference type="NCBI Taxonomy" id="572265"/>
    <lineage>
        <taxon>Bacteria</taxon>
        <taxon>Pseudomonadati</taxon>
        <taxon>Pseudomonadota</taxon>
        <taxon>Gammaproteobacteria</taxon>
        <taxon>Enterobacterales</taxon>
        <taxon>Enterobacteriaceae</taxon>
        <taxon>aphid secondary symbionts</taxon>
        <taxon>Candidatus Hamiltonella</taxon>
    </lineage>
</organism>
<reference key="1">
    <citation type="journal article" date="2009" name="Proc. Natl. Acad. Sci. U.S.A.">
        <title>Hamiltonella defensa, genome evolution of protective bacterial endosymbiont from pathogenic ancestors.</title>
        <authorList>
            <person name="Degnan P.H."/>
            <person name="Yu Y."/>
            <person name="Sisneros N."/>
            <person name="Wing R.A."/>
            <person name="Moran N.A."/>
        </authorList>
    </citation>
    <scope>NUCLEOTIDE SEQUENCE [LARGE SCALE GENOMIC DNA]</scope>
    <source>
        <strain>5AT</strain>
    </source>
</reference>
<keyword id="KW-1003">Cell membrane</keyword>
<keyword id="KW-0285">Flavoprotein</keyword>
<keyword id="KW-0288">FMN</keyword>
<keyword id="KW-0472">Membrane</keyword>
<keyword id="KW-0560">Oxidoreductase</keyword>
<keyword id="KW-0665">Pyrimidine biosynthesis</keyword>
<gene>
    <name evidence="1" type="primary">pyrD</name>
    <name type="ordered locus">HDEF_0655</name>
</gene>
<accession>C4K4A3</accession>
<comment type="function">
    <text evidence="1">Catalyzes the conversion of dihydroorotate to orotate with quinone as electron acceptor.</text>
</comment>
<comment type="catalytic activity">
    <reaction evidence="1">
        <text>(S)-dihydroorotate + a quinone = orotate + a quinol</text>
        <dbReference type="Rhea" id="RHEA:30187"/>
        <dbReference type="ChEBI" id="CHEBI:24646"/>
        <dbReference type="ChEBI" id="CHEBI:30839"/>
        <dbReference type="ChEBI" id="CHEBI:30864"/>
        <dbReference type="ChEBI" id="CHEBI:132124"/>
        <dbReference type="EC" id="1.3.5.2"/>
    </reaction>
</comment>
<comment type="cofactor">
    <cofactor evidence="1">
        <name>FMN</name>
        <dbReference type="ChEBI" id="CHEBI:58210"/>
    </cofactor>
    <text evidence="1">Binds 1 FMN per subunit.</text>
</comment>
<comment type="pathway">
    <text evidence="1">Pyrimidine metabolism; UMP biosynthesis via de novo pathway; orotate from (S)-dihydroorotate (quinone route): step 1/1.</text>
</comment>
<comment type="subunit">
    <text evidence="1">Monomer.</text>
</comment>
<comment type="subcellular location">
    <subcellularLocation>
        <location evidence="1">Cell membrane</location>
        <topology evidence="1">Peripheral membrane protein</topology>
    </subcellularLocation>
</comment>
<comment type="similarity">
    <text evidence="1">Belongs to the dihydroorotate dehydrogenase family. Type 2 subfamily.</text>
</comment>
<protein>
    <recommendedName>
        <fullName evidence="1">Dihydroorotate dehydrogenase (quinone)</fullName>
        <ecNumber evidence="1">1.3.5.2</ecNumber>
    </recommendedName>
    <alternativeName>
        <fullName evidence="1">DHOdehase</fullName>
        <shortName evidence="1">DHOD</shortName>
        <shortName evidence="1">DHODase</shortName>
    </alternativeName>
    <alternativeName>
        <fullName evidence="1">Dihydroorotate oxidase</fullName>
    </alternativeName>
</protein>